<organism>
    <name type="scientific">Mus musculus</name>
    <name type="common">Mouse</name>
    <dbReference type="NCBI Taxonomy" id="10090"/>
    <lineage>
        <taxon>Eukaryota</taxon>
        <taxon>Metazoa</taxon>
        <taxon>Chordata</taxon>
        <taxon>Craniata</taxon>
        <taxon>Vertebrata</taxon>
        <taxon>Euteleostomi</taxon>
        <taxon>Mammalia</taxon>
        <taxon>Eutheria</taxon>
        <taxon>Euarchontoglires</taxon>
        <taxon>Glires</taxon>
        <taxon>Rodentia</taxon>
        <taxon>Myomorpha</taxon>
        <taxon>Muroidea</taxon>
        <taxon>Muridae</taxon>
        <taxon>Murinae</taxon>
        <taxon>Mus</taxon>
        <taxon>Mus</taxon>
    </lineage>
</organism>
<comment type="function">
    <text evidence="1">May play a role in endo(sarco)plasmic reticulum (ER/SR) mitochondrial signaling (By similarity). May be part of the ubiquitin-proteasome system (UPS) and affect ubiquitination and degradation of target substrates in cardiomyocytes (By similarity).</text>
</comment>
<comment type="alternative products">
    <event type="alternative splicing"/>
    <isoform>
        <id>Q8BGY4-1</id>
        <name>1</name>
        <sequence type="displayed"/>
    </isoform>
    <isoform>
        <id>Q8BGY4-2</id>
        <name>2</name>
        <sequence type="described" ref="VSP_019474"/>
    </isoform>
    <isoform>
        <id>Q8BGY4-3</id>
        <name>3</name>
        <sequence type="described" ref="VSP_019473"/>
    </isoform>
</comment>
<comment type="sequence caution" evidence="5">
    <conflict type="erroneous initiation">
        <sequence resource="EMBL-CDS" id="AAH23909"/>
    </conflict>
</comment>
<sequence>MAESGGSSGSSQSPERPSSLADRNGALKCTFSAAGHSTGLLQGLAALRAQGQLLDVVLTVNSEAFHAHKVVLAACSDYFRAMFTGGMREANQAVIQLQGVSARGLRHIIDFAYSAEVTLDLDCVQDVLGAAVFLQMLPVVELCEDFLKAAMSVETCLHIGQMATTFSLTSLRESVDAFTFRHFLQIAAEEDFLRLPLERLVFFLQSNRLQSCAEIDLFRAAVRWLQHDPARRARASLVLRHVRFPLMQPAELVDSVQTLDVMLDDALCRQYLLEAFSYHVLPCRQHDMQSPRTAVRSDVASLVAFGGTPYTDSDRAVSSKVFQLPEPGARHFRELTEMELGCSHAGVAVLDNFVYVAGGQHLQHRSGEGAVDACYRYDPQRNRWLRLRALRESRVQFQLTALGGLLYATGGRNRAGSLASVERYCPRRDSWDFACPLKRRTWGHAGAAAAGRLYISGGYGVSAEDKKALQCYDPAADRWEPRAPMREPRVLHAMLGAAGRIYALGGRMDHVDRCFDVLAVEYYVPDADQWTSVTPMRAGQSEAGCCLLERKIYIVGGYNWRLNNVTGIVQVYNTETDEWERDLHFPESFAGIACAAVLLPRSGHGR</sequence>
<evidence type="ECO:0000250" key="1">
    <source>
        <dbReference type="UniProtKB" id="Q53HC5"/>
    </source>
</evidence>
<evidence type="ECO:0000255" key="2">
    <source>
        <dbReference type="PROSITE-ProRule" id="PRU00037"/>
    </source>
</evidence>
<evidence type="ECO:0000256" key="3">
    <source>
        <dbReference type="SAM" id="MobiDB-lite"/>
    </source>
</evidence>
<evidence type="ECO:0000303" key="4">
    <source>
    </source>
</evidence>
<evidence type="ECO:0000305" key="5"/>
<evidence type="ECO:0007744" key="6">
    <source>
    </source>
</evidence>
<keyword id="KW-0007">Acetylation</keyword>
<keyword id="KW-0025">Alternative splicing</keyword>
<keyword id="KW-0880">Kelch repeat</keyword>
<keyword id="KW-0597">Phosphoprotein</keyword>
<keyword id="KW-1185">Reference proteome</keyword>
<keyword id="KW-0677">Repeat</keyword>
<protein>
    <recommendedName>
        <fullName>Kelch-like protein 26</fullName>
    </recommendedName>
</protein>
<accession>Q8BGY4</accession>
<accession>Q8CIG6</accession>
<accession>Q8R153</accession>
<name>KLH26_MOUSE</name>
<feature type="initiator methionine" description="Removed" evidence="1">
    <location>
        <position position="1"/>
    </location>
</feature>
<feature type="chain" id="PRO_0000242689" description="Kelch-like protein 26">
    <location>
        <begin position="2"/>
        <end position="606"/>
    </location>
</feature>
<feature type="domain" description="BTB" evidence="2">
    <location>
        <begin position="54"/>
        <end position="121"/>
    </location>
</feature>
<feature type="domain" description="BACK">
    <location>
        <begin position="156"/>
        <end position="257"/>
    </location>
</feature>
<feature type="repeat" description="Kelch 1">
    <location>
        <begin position="301"/>
        <end position="352"/>
    </location>
</feature>
<feature type="repeat" description="Kelch 2">
    <location>
        <begin position="353"/>
        <end position="404"/>
    </location>
</feature>
<feature type="repeat" description="Kelch 3">
    <location>
        <begin position="406"/>
        <end position="451"/>
    </location>
</feature>
<feature type="repeat" description="Kelch 4">
    <location>
        <begin position="452"/>
        <end position="499"/>
    </location>
</feature>
<feature type="repeat" description="Kelch 5">
    <location>
        <begin position="501"/>
        <end position="550"/>
    </location>
</feature>
<feature type="repeat" description="Kelch 6">
    <location>
        <begin position="552"/>
        <end position="599"/>
    </location>
</feature>
<feature type="region of interest" description="Disordered" evidence="3">
    <location>
        <begin position="1"/>
        <end position="20"/>
    </location>
</feature>
<feature type="compositionally biased region" description="Low complexity" evidence="3">
    <location>
        <begin position="1"/>
        <end position="19"/>
    </location>
</feature>
<feature type="modified residue" description="N-acetylalanine" evidence="1">
    <location>
        <position position="2"/>
    </location>
</feature>
<feature type="modified residue" description="Phosphoserine" evidence="6">
    <location>
        <position position="430"/>
    </location>
</feature>
<feature type="splice variant" id="VSP_019473" description="In isoform 3." evidence="4">
    <location>
        <begin position="1"/>
        <end position="81"/>
    </location>
</feature>
<feature type="splice variant" id="VSP_019474" description="In isoform 2." evidence="4">
    <location>
        <begin position="80"/>
        <end position="113"/>
    </location>
</feature>
<reference key="1">
    <citation type="journal article" date="2005" name="Science">
        <title>The transcriptional landscape of the mammalian genome.</title>
        <authorList>
            <person name="Carninci P."/>
            <person name="Kasukawa T."/>
            <person name="Katayama S."/>
            <person name="Gough J."/>
            <person name="Frith M.C."/>
            <person name="Maeda N."/>
            <person name="Oyama R."/>
            <person name="Ravasi T."/>
            <person name="Lenhard B."/>
            <person name="Wells C."/>
            <person name="Kodzius R."/>
            <person name="Shimokawa K."/>
            <person name="Bajic V.B."/>
            <person name="Brenner S.E."/>
            <person name="Batalov S."/>
            <person name="Forrest A.R."/>
            <person name="Zavolan M."/>
            <person name="Davis M.J."/>
            <person name="Wilming L.G."/>
            <person name="Aidinis V."/>
            <person name="Allen J.E."/>
            <person name="Ambesi-Impiombato A."/>
            <person name="Apweiler R."/>
            <person name="Aturaliya R.N."/>
            <person name="Bailey T.L."/>
            <person name="Bansal M."/>
            <person name="Baxter L."/>
            <person name="Beisel K.W."/>
            <person name="Bersano T."/>
            <person name="Bono H."/>
            <person name="Chalk A.M."/>
            <person name="Chiu K.P."/>
            <person name="Choudhary V."/>
            <person name="Christoffels A."/>
            <person name="Clutterbuck D.R."/>
            <person name="Crowe M.L."/>
            <person name="Dalla E."/>
            <person name="Dalrymple B.P."/>
            <person name="de Bono B."/>
            <person name="Della Gatta G."/>
            <person name="di Bernardo D."/>
            <person name="Down T."/>
            <person name="Engstrom P."/>
            <person name="Fagiolini M."/>
            <person name="Faulkner G."/>
            <person name="Fletcher C.F."/>
            <person name="Fukushima T."/>
            <person name="Furuno M."/>
            <person name="Futaki S."/>
            <person name="Gariboldi M."/>
            <person name="Georgii-Hemming P."/>
            <person name="Gingeras T.R."/>
            <person name="Gojobori T."/>
            <person name="Green R.E."/>
            <person name="Gustincich S."/>
            <person name="Harbers M."/>
            <person name="Hayashi Y."/>
            <person name="Hensch T.K."/>
            <person name="Hirokawa N."/>
            <person name="Hill D."/>
            <person name="Huminiecki L."/>
            <person name="Iacono M."/>
            <person name="Ikeo K."/>
            <person name="Iwama A."/>
            <person name="Ishikawa T."/>
            <person name="Jakt M."/>
            <person name="Kanapin A."/>
            <person name="Katoh M."/>
            <person name="Kawasawa Y."/>
            <person name="Kelso J."/>
            <person name="Kitamura H."/>
            <person name="Kitano H."/>
            <person name="Kollias G."/>
            <person name="Krishnan S.P."/>
            <person name="Kruger A."/>
            <person name="Kummerfeld S.K."/>
            <person name="Kurochkin I.V."/>
            <person name="Lareau L.F."/>
            <person name="Lazarevic D."/>
            <person name="Lipovich L."/>
            <person name="Liu J."/>
            <person name="Liuni S."/>
            <person name="McWilliam S."/>
            <person name="Madan Babu M."/>
            <person name="Madera M."/>
            <person name="Marchionni L."/>
            <person name="Matsuda H."/>
            <person name="Matsuzawa S."/>
            <person name="Miki H."/>
            <person name="Mignone F."/>
            <person name="Miyake S."/>
            <person name="Morris K."/>
            <person name="Mottagui-Tabar S."/>
            <person name="Mulder N."/>
            <person name="Nakano N."/>
            <person name="Nakauchi H."/>
            <person name="Ng P."/>
            <person name="Nilsson R."/>
            <person name="Nishiguchi S."/>
            <person name="Nishikawa S."/>
            <person name="Nori F."/>
            <person name="Ohara O."/>
            <person name="Okazaki Y."/>
            <person name="Orlando V."/>
            <person name="Pang K.C."/>
            <person name="Pavan W.J."/>
            <person name="Pavesi G."/>
            <person name="Pesole G."/>
            <person name="Petrovsky N."/>
            <person name="Piazza S."/>
            <person name="Reed J."/>
            <person name="Reid J.F."/>
            <person name="Ring B.Z."/>
            <person name="Ringwald M."/>
            <person name="Rost B."/>
            <person name="Ruan Y."/>
            <person name="Salzberg S.L."/>
            <person name="Sandelin A."/>
            <person name="Schneider C."/>
            <person name="Schoenbach C."/>
            <person name="Sekiguchi K."/>
            <person name="Semple C.A."/>
            <person name="Seno S."/>
            <person name="Sessa L."/>
            <person name="Sheng Y."/>
            <person name="Shibata Y."/>
            <person name="Shimada H."/>
            <person name="Shimada K."/>
            <person name="Silva D."/>
            <person name="Sinclair B."/>
            <person name="Sperling S."/>
            <person name="Stupka E."/>
            <person name="Sugiura K."/>
            <person name="Sultana R."/>
            <person name="Takenaka Y."/>
            <person name="Taki K."/>
            <person name="Tammoja K."/>
            <person name="Tan S.L."/>
            <person name="Tang S."/>
            <person name="Taylor M.S."/>
            <person name="Tegner J."/>
            <person name="Teichmann S.A."/>
            <person name="Ueda H.R."/>
            <person name="van Nimwegen E."/>
            <person name="Verardo R."/>
            <person name="Wei C.L."/>
            <person name="Yagi K."/>
            <person name="Yamanishi H."/>
            <person name="Zabarovsky E."/>
            <person name="Zhu S."/>
            <person name="Zimmer A."/>
            <person name="Hide W."/>
            <person name="Bult C."/>
            <person name="Grimmond S.M."/>
            <person name="Teasdale R.D."/>
            <person name="Liu E.T."/>
            <person name="Brusic V."/>
            <person name="Quackenbush J."/>
            <person name="Wahlestedt C."/>
            <person name="Mattick J.S."/>
            <person name="Hume D.A."/>
            <person name="Kai C."/>
            <person name="Sasaki D."/>
            <person name="Tomaru Y."/>
            <person name="Fukuda S."/>
            <person name="Kanamori-Katayama M."/>
            <person name="Suzuki M."/>
            <person name="Aoki J."/>
            <person name="Arakawa T."/>
            <person name="Iida J."/>
            <person name="Imamura K."/>
            <person name="Itoh M."/>
            <person name="Kato T."/>
            <person name="Kawaji H."/>
            <person name="Kawagashira N."/>
            <person name="Kawashima T."/>
            <person name="Kojima M."/>
            <person name="Kondo S."/>
            <person name="Konno H."/>
            <person name="Nakano K."/>
            <person name="Ninomiya N."/>
            <person name="Nishio T."/>
            <person name="Okada M."/>
            <person name="Plessy C."/>
            <person name="Shibata K."/>
            <person name="Shiraki T."/>
            <person name="Suzuki S."/>
            <person name="Tagami M."/>
            <person name="Waki K."/>
            <person name="Watahiki A."/>
            <person name="Okamura-Oho Y."/>
            <person name="Suzuki H."/>
            <person name="Kawai J."/>
            <person name="Hayashizaki Y."/>
        </authorList>
    </citation>
    <scope>NUCLEOTIDE SEQUENCE [LARGE SCALE MRNA] (ISOFORM 1)</scope>
    <source>
        <strain>C57BL/6J</strain>
        <tissue>Aorta</tissue>
        <tissue>Cerebellum</tissue>
        <tissue>Head</tissue>
        <tissue>Hippocampus</tissue>
        <tissue>Vein</tissue>
    </source>
</reference>
<reference key="2">
    <citation type="journal article" date="2004" name="Genome Res.">
        <title>The status, quality, and expansion of the NIH full-length cDNA project: the Mammalian Gene Collection (MGC).</title>
        <authorList>
            <consortium name="The MGC Project Team"/>
        </authorList>
    </citation>
    <scope>NUCLEOTIDE SEQUENCE [LARGE SCALE MRNA] (ISOFORMS 1; 2 AND 3)</scope>
    <source>
        <strain>FVB/N</strain>
        <tissue>Mammary gland</tissue>
        <tissue>Mammary tumor</tissue>
    </source>
</reference>
<reference key="3">
    <citation type="journal article" date="2010" name="Cell">
        <title>A tissue-specific atlas of mouse protein phosphorylation and expression.</title>
        <authorList>
            <person name="Huttlin E.L."/>
            <person name="Jedrychowski M.P."/>
            <person name="Elias J.E."/>
            <person name="Goswami T."/>
            <person name="Rad R."/>
            <person name="Beausoleil S.A."/>
            <person name="Villen J."/>
            <person name="Haas W."/>
            <person name="Sowa M.E."/>
            <person name="Gygi S.P."/>
        </authorList>
    </citation>
    <scope>PHOSPHORYLATION [LARGE SCALE ANALYSIS] AT SER-430</scope>
    <scope>IDENTIFICATION BY MASS SPECTROMETRY [LARGE SCALE ANALYSIS]</scope>
    <source>
        <tissue>Brain</tissue>
    </source>
</reference>
<proteinExistence type="evidence at protein level"/>
<gene>
    <name type="primary">Klhl26</name>
</gene>
<dbReference type="EMBL" id="AK041089">
    <property type="protein sequence ID" value="BAC30815.1"/>
    <property type="molecule type" value="mRNA"/>
</dbReference>
<dbReference type="EMBL" id="AK163170">
    <property type="protein sequence ID" value="BAE37219.1"/>
    <property type="molecule type" value="mRNA"/>
</dbReference>
<dbReference type="EMBL" id="AK049946">
    <property type="protein sequence ID" value="BAC33999.1"/>
    <property type="molecule type" value="mRNA"/>
</dbReference>
<dbReference type="EMBL" id="AK048601">
    <property type="protein sequence ID" value="BAC33385.1"/>
    <property type="molecule type" value="mRNA"/>
</dbReference>
<dbReference type="EMBL" id="BC023909">
    <property type="protein sequence ID" value="AAH23909.1"/>
    <property type="status" value="ALT_INIT"/>
    <property type="molecule type" value="mRNA"/>
</dbReference>
<dbReference type="EMBL" id="BC025484">
    <property type="protein sequence ID" value="AAH25484.1"/>
    <property type="molecule type" value="mRNA"/>
</dbReference>
<dbReference type="EMBL" id="BC098185">
    <property type="protein sequence ID" value="AAH98185.1"/>
    <property type="molecule type" value="mRNA"/>
</dbReference>
<dbReference type="CCDS" id="CCDS40373.1">
    <molecule id="Q8BGY4-1"/>
</dbReference>
<dbReference type="CCDS" id="CCDS90410.1">
    <molecule id="Q8BGY4-3"/>
</dbReference>
<dbReference type="RefSeq" id="NP_001116302.1">
    <property type="nucleotide sequence ID" value="NM_001122830.1"/>
</dbReference>
<dbReference type="RefSeq" id="NP_001351187.1">
    <molecule id="Q8BGY4-3"/>
    <property type="nucleotide sequence ID" value="NM_001364258.1"/>
</dbReference>
<dbReference type="RefSeq" id="NP_848886.1">
    <molecule id="Q8BGY4-1"/>
    <property type="nucleotide sequence ID" value="NM_178771.3"/>
</dbReference>
<dbReference type="RefSeq" id="XP_006509717.1">
    <molecule id="Q8BGY4-3"/>
    <property type="nucleotide sequence ID" value="XM_006509654.5"/>
</dbReference>
<dbReference type="RefSeq" id="XP_011240600.1">
    <property type="nucleotide sequence ID" value="XM_011242298.1"/>
</dbReference>
<dbReference type="RefSeq" id="XP_030099343.1">
    <molecule id="Q8BGY4-3"/>
    <property type="nucleotide sequence ID" value="XM_030243483.2"/>
</dbReference>
<dbReference type="SMR" id="Q8BGY4"/>
<dbReference type="FunCoup" id="Q8BGY4">
    <property type="interactions" value="28"/>
</dbReference>
<dbReference type="STRING" id="10090.ENSMUSP00000069077"/>
<dbReference type="iPTMnet" id="Q8BGY4"/>
<dbReference type="PhosphoSitePlus" id="Q8BGY4"/>
<dbReference type="PaxDb" id="10090-ENSMUSP00000069077"/>
<dbReference type="ProteomicsDB" id="263623">
    <molecule id="Q8BGY4-1"/>
</dbReference>
<dbReference type="ProteomicsDB" id="263624">
    <molecule id="Q8BGY4-2"/>
</dbReference>
<dbReference type="ProteomicsDB" id="263625">
    <molecule id="Q8BGY4-3"/>
</dbReference>
<dbReference type="Pumba" id="Q8BGY4"/>
<dbReference type="Antibodypedia" id="15139">
    <property type="antibodies" value="122 antibodies from 23 providers"/>
</dbReference>
<dbReference type="Ensembl" id="ENSMUST00000066597.13">
    <molecule id="Q8BGY4-1"/>
    <property type="protein sequence ID" value="ENSMUSP00000069077.6"/>
    <property type="gene ID" value="ENSMUSG00000055707.14"/>
</dbReference>
<dbReference type="Ensembl" id="ENSMUST00000209567.2">
    <molecule id="Q8BGY4-3"/>
    <property type="protein sequence ID" value="ENSMUSP00000147349.2"/>
    <property type="gene ID" value="ENSMUSG00000055707.14"/>
</dbReference>
<dbReference type="Ensembl" id="ENSMUST00000210250.2">
    <molecule id="Q8BGY4-2"/>
    <property type="protein sequence ID" value="ENSMUSP00000147385.2"/>
    <property type="gene ID" value="ENSMUSG00000055707.14"/>
</dbReference>
<dbReference type="GeneID" id="234378"/>
<dbReference type="KEGG" id="mmu:234378"/>
<dbReference type="UCSC" id="uc009mah.2">
    <molecule id="Q8BGY4-1"/>
    <property type="organism name" value="mouse"/>
</dbReference>
<dbReference type="AGR" id="MGI:2443079"/>
<dbReference type="CTD" id="55295"/>
<dbReference type="MGI" id="MGI:2443079">
    <property type="gene designation" value="Klhl26"/>
</dbReference>
<dbReference type="VEuPathDB" id="HostDB:ENSMUSG00000055707"/>
<dbReference type="eggNOG" id="KOG4441">
    <property type="taxonomic scope" value="Eukaryota"/>
</dbReference>
<dbReference type="GeneTree" id="ENSGT00940000159238"/>
<dbReference type="HOGENOM" id="CLU_004253_14_3_1"/>
<dbReference type="InParanoid" id="Q8BGY4"/>
<dbReference type="OMA" id="INREAFH"/>
<dbReference type="OrthoDB" id="45365at2759"/>
<dbReference type="PhylomeDB" id="Q8BGY4"/>
<dbReference type="TreeFam" id="TF328485"/>
<dbReference type="BioGRID-ORCS" id="234378">
    <property type="hits" value="1 hit in 77 CRISPR screens"/>
</dbReference>
<dbReference type="ChiTaRS" id="Klhl26">
    <property type="organism name" value="mouse"/>
</dbReference>
<dbReference type="PRO" id="PR:Q8BGY4"/>
<dbReference type="Proteomes" id="UP000000589">
    <property type="component" value="Chromosome 8"/>
</dbReference>
<dbReference type="RNAct" id="Q8BGY4">
    <property type="molecule type" value="protein"/>
</dbReference>
<dbReference type="Bgee" id="ENSMUSG00000055707">
    <property type="expression patterns" value="Expressed in primary visual cortex and 223 other cell types or tissues"/>
</dbReference>
<dbReference type="ExpressionAtlas" id="Q8BGY4">
    <property type="expression patterns" value="baseline and differential"/>
</dbReference>
<dbReference type="CDD" id="cd18255">
    <property type="entry name" value="BTB_POZ_KLHL26"/>
    <property type="match status" value="1"/>
</dbReference>
<dbReference type="Gene3D" id="1.25.40.420">
    <property type="match status" value="1"/>
</dbReference>
<dbReference type="Gene3D" id="2.120.10.80">
    <property type="entry name" value="Kelch-type beta propeller"/>
    <property type="match status" value="1"/>
</dbReference>
<dbReference type="Gene3D" id="3.30.710.10">
    <property type="entry name" value="Potassium Channel Kv1.1, Chain A"/>
    <property type="match status" value="1"/>
</dbReference>
<dbReference type="InterPro" id="IPR011705">
    <property type="entry name" value="BACK"/>
</dbReference>
<dbReference type="InterPro" id="IPR017096">
    <property type="entry name" value="BTB-kelch_protein"/>
</dbReference>
<dbReference type="InterPro" id="IPR000210">
    <property type="entry name" value="BTB/POZ_dom"/>
</dbReference>
<dbReference type="InterPro" id="IPR030588">
    <property type="entry name" value="BTB_POZ_KLHL26"/>
</dbReference>
<dbReference type="InterPro" id="IPR015915">
    <property type="entry name" value="Kelch-typ_b-propeller"/>
</dbReference>
<dbReference type="InterPro" id="IPR006652">
    <property type="entry name" value="Kelch_1"/>
</dbReference>
<dbReference type="InterPro" id="IPR011333">
    <property type="entry name" value="SKP1/BTB/POZ_sf"/>
</dbReference>
<dbReference type="PANTHER" id="PTHR45632:SF13">
    <property type="entry name" value="KELCH-LIKE PROTEIN 26"/>
    <property type="match status" value="1"/>
</dbReference>
<dbReference type="PANTHER" id="PTHR45632">
    <property type="entry name" value="LD33804P"/>
    <property type="match status" value="1"/>
</dbReference>
<dbReference type="Pfam" id="PF07707">
    <property type="entry name" value="BACK"/>
    <property type="match status" value="1"/>
</dbReference>
<dbReference type="Pfam" id="PF00651">
    <property type="entry name" value="BTB"/>
    <property type="match status" value="1"/>
</dbReference>
<dbReference type="Pfam" id="PF01344">
    <property type="entry name" value="Kelch_1"/>
    <property type="match status" value="3"/>
</dbReference>
<dbReference type="PIRSF" id="PIRSF037037">
    <property type="entry name" value="Kelch-like_protein_gigaxonin"/>
    <property type="match status" value="1"/>
</dbReference>
<dbReference type="SMART" id="SM00875">
    <property type="entry name" value="BACK"/>
    <property type="match status" value="1"/>
</dbReference>
<dbReference type="SMART" id="SM00225">
    <property type="entry name" value="BTB"/>
    <property type="match status" value="1"/>
</dbReference>
<dbReference type="SMART" id="SM00612">
    <property type="entry name" value="Kelch"/>
    <property type="match status" value="5"/>
</dbReference>
<dbReference type="SUPFAM" id="SSF117281">
    <property type="entry name" value="Kelch motif"/>
    <property type="match status" value="1"/>
</dbReference>
<dbReference type="SUPFAM" id="SSF54695">
    <property type="entry name" value="POZ domain"/>
    <property type="match status" value="1"/>
</dbReference>
<dbReference type="PROSITE" id="PS50097">
    <property type="entry name" value="BTB"/>
    <property type="match status" value="1"/>
</dbReference>